<gene>
    <name type="primary">hoxa3a</name>
</gene>
<keyword id="KW-0217">Developmental protein</keyword>
<keyword id="KW-0238">DNA-binding</keyword>
<keyword id="KW-0371">Homeobox</keyword>
<keyword id="KW-0539">Nucleus</keyword>
<keyword id="KW-1185">Reference proteome</keyword>
<keyword id="KW-0804">Transcription</keyword>
<keyword id="KW-0805">Transcription regulation</keyword>
<reference key="1">
    <citation type="journal article" date="2006" name="Proc. Natl. Acad. Sci. U.S.A.">
        <title>Highly conserved syntenic blocks at the vertebrate Hox loci and conserved regulatory elements within and outside Hox gene clusters.</title>
        <authorList>
            <person name="Lee A.P."/>
            <person name="Koh E.G.L."/>
            <person name="Tay A."/>
            <person name="Brenner S."/>
            <person name="Venkatesh B."/>
        </authorList>
    </citation>
    <scope>NUCLEOTIDE SEQUENCE [GENOMIC DNA]</scope>
</reference>
<organism>
    <name type="scientific">Takifugu rubripes</name>
    <name type="common">Japanese pufferfish</name>
    <name type="synonym">Fugu rubripes</name>
    <dbReference type="NCBI Taxonomy" id="31033"/>
    <lineage>
        <taxon>Eukaryota</taxon>
        <taxon>Metazoa</taxon>
        <taxon>Chordata</taxon>
        <taxon>Craniata</taxon>
        <taxon>Vertebrata</taxon>
        <taxon>Euteleostomi</taxon>
        <taxon>Actinopterygii</taxon>
        <taxon>Neopterygii</taxon>
        <taxon>Teleostei</taxon>
        <taxon>Neoteleostei</taxon>
        <taxon>Acanthomorphata</taxon>
        <taxon>Eupercaria</taxon>
        <taxon>Tetraodontiformes</taxon>
        <taxon>Tetradontoidea</taxon>
        <taxon>Tetraodontidae</taxon>
        <taxon>Takifugu</taxon>
    </lineage>
</organism>
<dbReference type="EMBL" id="DQ481663">
    <property type="protein sequence ID" value="ABF22382.1"/>
    <property type="molecule type" value="Genomic_DNA"/>
</dbReference>
<dbReference type="SMR" id="Q1KL12"/>
<dbReference type="FunCoup" id="Q1KL12">
    <property type="interactions" value="2"/>
</dbReference>
<dbReference type="STRING" id="31033.ENSTRUP00000053450"/>
<dbReference type="Ensembl" id="ENSTRUT00000050797.2">
    <property type="protein sequence ID" value="ENSTRUP00000053450.1"/>
    <property type="gene ID" value="ENSTRUG00000022811.2"/>
</dbReference>
<dbReference type="GeneID" id="101068246"/>
<dbReference type="KEGG" id="tru:101068246"/>
<dbReference type="CTD" id="58049"/>
<dbReference type="eggNOG" id="KOG0489">
    <property type="taxonomic scope" value="Eukaryota"/>
</dbReference>
<dbReference type="GeneTree" id="ENSGT00940000159522"/>
<dbReference type="InParanoid" id="Q1KL12"/>
<dbReference type="OMA" id="GEMAEGC"/>
<dbReference type="OrthoDB" id="6159439at2759"/>
<dbReference type="Proteomes" id="UP000005226">
    <property type="component" value="Chromosome 12"/>
</dbReference>
<dbReference type="GO" id="GO:0005634">
    <property type="term" value="C:nucleus"/>
    <property type="evidence" value="ECO:0007669"/>
    <property type="project" value="UniProtKB-SubCell"/>
</dbReference>
<dbReference type="GO" id="GO:0000981">
    <property type="term" value="F:DNA-binding transcription factor activity, RNA polymerase II-specific"/>
    <property type="evidence" value="ECO:0007669"/>
    <property type="project" value="InterPro"/>
</dbReference>
<dbReference type="GO" id="GO:0000978">
    <property type="term" value="F:RNA polymerase II cis-regulatory region sequence-specific DNA binding"/>
    <property type="evidence" value="ECO:0007669"/>
    <property type="project" value="TreeGrafter"/>
</dbReference>
<dbReference type="GO" id="GO:0009952">
    <property type="term" value="P:anterior/posterior pattern specification"/>
    <property type="evidence" value="ECO:0007669"/>
    <property type="project" value="TreeGrafter"/>
</dbReference>
<dbReference type="GO" id="GO:0048704">
    <property type="term" value="P:embryonic skeletal system morphogenesis"/>
    <property type="evidence" value="ECO:0007669"/>
    <property type="project" value="TreeGrafter"/>
</dbReference>
<dbReference type="CDD" id="cd00086">
    <property type="entry name" value="homeodomain"/>
    <property type="match status" value="1"/>
</dbReference>
<dbReference type="FunFam" id="1.10.10.60:FF:000094">
    <property type="entry name" value="Homeobox protein Hox-A3"/>
    <property type="match status" value="1"/>
</dbReference>
<dbReference type="Gene3D" id="1.10.10.60">
    <property type="entry name" value="Homeodomain-like"/>
    <property type="match status" value="1"/>
</dbReference>
<dbReference type="InterPro" id="IPR025281">
    <property type="entry name" value="DUF4074"/>
</dbReference>
<dbReference type="InterPro" id="IPR001356">
    <property type="entry name" value="HD"/>
</dbReference>
<dbReference type="InterPro" id="IPR020479">
    <property type="entry name" value="HD_metazoa"/>
</dbReference>
<dbReference type="InterPro" id="IPR001827">
    <property type="entry name" value="Homeobox_Antennapedia_CS"/>
</dbReference>
<dbReference type="InterPro" id="IPR017970">
    <property type="entry name" value="Homeobox_CS"/>
</dbReference>
<dbReference type="InterPro" id="IPR009057">
    <property type="entry name" value="Homeodomain-like_sf"/>
</dbReference>
<dbReference type="PANTHER" id="PTHR45664:SF13">
    <property type="entry name" value="HOMEOBOX PROTEIN HOX-A3"/>
    <property type="match status" value="1"/>
</dbReference>
<dbReference type="PANTHER" id="PTHR45664">
    <property type="entry name" value="PROTEIN ZERKNUELLT 1-RELATED"/>
    <property type="match status" value="1"/>
</dbReference>
<dbReference type="Pfam" id="PF13293">
    <property type="entry name" value="DUF4074"/>
    <property type="match status" value="1"/>
</dbReference>
<dbReference type="Pfam" id="PF00046">
    <property type="entry name" value="Homeodomain"/>
    <property type="match status" value="1"/>
</dbReference>
<dbReference type="PRINTS" id="PR00024">
    <property type="entry name" value="HOMEOBOX"/>
</dbReference>
<dbReference type="SMART" id="SM00389">
    <property type="entry name" value="HOX"/>
    <property type="match status" value="1"/>
</dbReference>
<dbReference type="SUPFAM" id="SSF46689">
    <property type="entry name" value="Homeodomain-like"/>
    <property type="match status" value="1"/>
</dbReference>
<dbReference type="PROSITE" id="PS00032">
    <property type="entry name" value="ANTENNAPEDIA"/>
    <property type="match status" value="1"/>
</dbReference>
<dbReference type="PROSITE" id="PS00027">
    <property type="entry name" value="HOMEOBOX_1"/>
    <property type="match status" value="1"/>
</dbReference>
<dbReference type="PROSITE" id="PS50071">
    <property type="entry name" value="HOMEOBOX_2"/>
    <property type="match status" value="1"/>
</dbReference>
<accession>Q1KL12</accession>
<comment type="function">
    <text evidence="1">Sequence-specific transcription factor which is part of a developmental regulatory system that provides cells with specific positional identities on the anterior-posterior axis.</text>
</comment>
<comment type="subcellular location">
    <subcellularLocation>
        <location evidence="2">Nucleus</location>
    </subcellularLocation>
</comment>
<comment type="similarity">
    <text evidence="4">Belongs to the Antp homeobox family.</text>
</comment>
<sequence>MQKATYYDSSAIYSGYPYQSANGFSYDANQIQYPRTSHVESEYHRPACSLQSPGGSVALQKREMAAENCDRTTAVQAVQSKVHPESNQPQVPVSAPPPPPQSPGAISQTTSNGSNQPTAKNSSPTSASRGKQIFPWMKESRQATKQKSTSNTSSVESCPGDKSPPGSAASKRARTAYTSAQLVELEKEFHFNRYLCRPRRVEMANLLNLTERQIKIWFQNRRMKYKKDQKGAGMMPSPGGQSPRSPVGPGSTGAGGGGYLNSMHSLVNSVPFESQSPTSYNKPHQNAYGMATSYPPPLSSSHNNCPPTQKRYAGTDSATPEYDAHPLQGNGSYGTHMQGSPVYVGGGYIDSVPNSGSSVFGLTHLPHPPSANMDYNGAITMGNSQHHGVCDPTPTYTDLTSHYSQGRIQEAPKLTHL</sequence>
<evidence type="ECO:0000250" key="1"/>
<evidence type="ECO:0000255" key="2">
    <source>
        <dbReference type="PROSITE-ProRule" id="PRU00108"/>
    </source>
</evidence>
<evidence type="ECO:0000256" key="3">
    <source>
        <dbReference type="SAM" id="MobiDB-lite"/>
    </source>
</evidence>
<evidence type="ECO:0000305" key="4"/>
<feature type="chain" id="PRO_0000265965" description="Homeobox protein Hox-A3a">
    <location>
        <begin position="1"/>
        <end position="417"/>
    </location>
</feature>
<feature type="DNA-binding region" description="Homeobox" evidence="2">
    <location>
        <begin position="170"/>
        <end position="229"/>
    </location>
</feature>
<feature type="region of interest" description="Disordered" evidence="3">
    <location>
        <begin position="70"/>
        <end position="174"/>
    </location>
</feature>
<feature type="region of interest" description="Disordered" evidence="3">
    <location>
        <begin position="229"/>
        <end position="256"/>
    </location>
</feature>
<feature type="region of interest" description="Disordered" evidence="3">
    <location>
        <begin position="311"/>
        <end position="334"/>
    </location>
</feature>
<feature type="short sequence motif" description="Antp-type hexapeptide">
    <location>
        <begin position="133"/>
        <end position="138"/>
    </location>
</feature>
<feature type="compositionally biased region" description="Polar residues" evidence="3">
    <location>
        <begin position="104"/>
        <end position="129"/>
    </location>
</feature>
<feature type="compositionally biased region" description="Polar residues" evidence="3">
    <location>
        <begin position="143"/>
        <end position="156"/>
    </location>
</feature>
<protein>
    <recommendedName>
        <fullName>Homeobox protein Hox-A3a</fullName>
    </recommendedName>
</protein>
<proteinExistence type="inferred from homology"/>
<name>HXA3A_TAKRU</name>